<protein>
    <recommendedName>
        <fullName evidence="1">RNA polymerase-associated protein RapA</fullName>
        <ecNumber evidence="1">3.6.4.-</ecNumber>
    </recommendedName>
    <alternativeName>
        <fullName evidence="1">ATP-dependent helicase HepA</fullName>
    </alternativeName>
</protein>
<accession>B1LFZ3</accession>
<proteinExistence type="inferred from homology"/>
<evidence type="ECO:0000255" key="1">
    <source>
        <dbReference type="HAMAP-Rule" id="MF_01821"/>
    </source>
</evidence>
<comment type="function">
    <text evidence="1">Transcription regulator that activates transcription by stimulating RNA polymerase (RNAP) recycling in case of stress conditions such as supercoiled DNA or high salt concentrations. Probably acts by releasing the RNAP, when it is trapped or immobilized on tightly supercoiled DNA. Does not activate transcription on linear DNA. Probably not involved in DNA repair.</text>
</comment>
<comment type="subunit">
    <text evidence="1">Interacts with the RNAP. Has a higher affinity for the core RNAP than for the holoenzyme. Its ATPase activity is stimulated by binding to RNAP.</text>
</comment>
<comment type="similarity">
    <text evidence="1">Belongs to the SNF2/RAD54 helicase family. RapA subfamily.</text>
</comment>
<feature type="chain" id="PRO_1000188176" description="RNA polymerase-associated protein RapA">
    <location>
        <begin position="1"/>
        <end position="968"/>
    </location>
</feature>
<feature type="domain" description="Helicase ATP-binding" evidence="1">
    <location>
        <begin position="164"/>
        <end position="334"/>
    </location>
</feature>
<feature type="domain" description="Helicase C-terminal" evidence="1">
    <location>
        <begin position="490"/>
        <end position="662"/>
    </location>
</feature>
<feature type="short sequence motif" description="DEAH box">
    <location>
        <begin position="280"/>
        <end position="283"/>
    </location>
</feature>
<feature type="binding site" evidence="1">
    <location>
        <begin position="177"/>
        <end position="184"/>
    </location>
    <ligand>
        <name>ATP</name>
        <dbReference type="ChEBI" id="CHEBI:30616"/>
    </ligand>
</feature>
<sequence length="968" mass="109770">MPFTLGQRWISDTESELGLGTVVAVDARTVTLLFPSTGENRLYARSDSPVTRVMFNPGDTITSHDGWQMQVEEVKEENGLLTYIGTRLDTEESGVALREVFLDSKLVFSKPQDRLFAGQIDRMDRFALRYRARKYSSEQFRMPYSGLRGQRTSLIPHQLNIAHDVGRRHAPRVLLADEVGLGKTIEAGMILHQQLLSGAAERVLIIVPETLQHQWLVEMLRRFNLRFALFDDERYAEAQHDAYNPFDTEQLVICSLDFARRSKQRLEHLCEAEWDLLVVDEAHHLVWSEDAPSREYQAIEQLAEHVPGVLLLTATPEQLGMESHFARLRLLDPNRFHDFAQFVEEQKNYRPVADAVAMLLAGNKLSNDELNMLGEMIGEQDIEPLLQAANSDSEDAQSARQELVSMLMDRHGTSRVLFRNTRNGVKGFPKRELHTIKLPLPTQYQTAIKVSGIMGARKSAEDRARDMLYPERIYQEFEGDNATWWNFDPRVEWLMGYLTSHRSQKVLVICAKAATALQLEQVLREREGIRAAVFHEGMSIIERDRAAAWFAEEDTGAQVLLCSEIGSEGRNFQFASHMVMFDLPFNPDLLEQRIGRLDRIGQAHDIQIHVPYLEKTAQSVLVRWYHEGLDAFEHTCPTGRTIYDSVYNDLINYLASPDETEGFDDLIKNCREQHEALKAQLEQGRDRLLEIHSNGGEKAQALAESIEEQDDDTNLIAFAMNLFDIIGINQDDRGDNMIVLTPSDHMLVPDFPGLSEDGITITFDREVALAREDAQFITWEHPLIRNGLDLILSGDTGSSTISLLKNKALPVGTLLVELIYVVEAQAPKQLQLNRFLPPTPVRMLLDKNGNNLAAQVEFETFNRQLNAVNRHTGSKLVNAVQQDVHAILQLGEAQIEKSARALIDAARNEADEKLSAELSRLEALRAVNPNIRDDELTAIESNRQQVMESLDQAGWRLDALRLIVVTHQ</sequence>
<organism>
    <name type="scientific">Escherichia coli (strain SMS-3-5 / SECEC)</name>
    <dbReference type="NCBI Taxonomy" id="439855"/>
    <lineage>
        <taxon>Bacteria</taxon>
        <taxon>Pseudomonadati</taxon>
        <taxon>Pseudomonadota</taxon>
        <taxon>Gammaproteobacteria</taxon>
        <taxon>Enterobacterales</taxon>
        <taxon>Enterobacteriaceae</taxon>
        <taxon>Escherichia</taxon>
    </lineage>
</organism>
<reference key="1">
    <citation type="journal article" date="2008" name="J. Bacteriol.">
        <title>Insights into the environmental resistance gene pool from the genome sequence of the multidrug-resistant environmental isolate Escherichia coli SMS-3-5.</title>
        <authorList>
            <person name="Fricke W.F."/>
            <person name="Wright M.S."/>
            <person name="Lindell A.H."/>
            <person name="Harkins D.M."/>
            <person name="Baker-Austin C."/>
            <person name="Ravel J."/>
            <person name="Stepanauskas R."/>
        </authorList>
    </citation>
    <scope>NUCLEOTIDE SEQUENCE [LARGE SCALE GENOMIC DNA]</scope>
    <source>
        <strain>SMS-3-5 / SECEC</strain>
    </source>
</reference>
<dbReference type="EC" id="3.6.4.-" evidence="1"/>
<dbReference type="EMBL" id="CP000970">
    <property type="protein sequence ID" value="ACB16403.1"/>
    <property type="molecule type" value="Genomic_DNA"/>
</dbReference>
<dbReference type="RefSeq" id="WP_001117001.1">
    <property type="nucleotide sequence ID" value="NC_010498.1"/>
</dbReference>
<dbReference type="SMR" id="B1LFZ3"/>
<dbReference type="KEGG" id="ecm:EcSMS35_0061"/>
<dbReference type="HOGENOM" id="CLU_011520_0_0_6"/>
<dbReference type="Proteomes" id="UP000007011">
    <property type="component" value="Chromosome"/>
</dbReference>
<dbReference type="GO" id="GO:0005524">
    <property type="term" value="F:ATP binding"/>
    <property type="evidence" value="ECO:0007669"/>
    <property type="project" value="UniProtKB-UniRule"/>
</dbReference>
<dbReference type="GO" id="GO:0003677">
    <property type="term" value="F:DNA binding"/>
    <property type="evidence" value="ECO:0007669"/>
    <property type="project" value="UniProtKB-KW"/>
</dbReference>
<dbReference type="GO" id="GO:0004386">
    <property type="term" value="F:helicase activity"/>
    <property type="evidence" value="ECO:0007669"/>
    <property type="project" value="UniProtKB-UniRule"/>
</dbReference>
<dbReference type="GO" id="GO:0016817">
    <property type="term" value="F:hydrolase activity, acting on acid anhydrides"/>
    <property type="evidence" value="ECO:0007669"/>
    <property type="project" value="InterPro"/>
</dbReference>
<dbReference type="GO" id="GO:0006355">
    <property type="term" value="P:regulation of DNA-templated transcription"/>
    <property type="evidence" value="ECO:0007669"/>
    <property type="project" value="UniProtKB-UniRule"/>
</dbReference>
<dbReference type="CDD" id="cd18011">
    <property type="entry name" value="DEXDc_RapA"/>
    <property type="match status" value="1"/>
</dbReference>
<dbReference type="CDD" id="cd18793">
    <property type="entry name" value="SF2_C_SNF"/>
    <property type="match status" value="1"/>
</dbReference>
<dbReference type="FunFam" id="2.30.30.140:FF:000020">
    <property type="entry name" value="RNA polymerase-associated protein RapA"/>
    <property type="match status" value="1"/>
</dbReference>
<dbReference type="FunFam" id="2.30.30.930:FF:000001">
    <property type="entry name" value="RNA polymerase-associated protein RapA"/>
    <property type="match status" value="1"/>
</dbReference>
<dbReference type="FunFam" id="3.30.360.80:FF:000001">
    <property type="entry name" value="RNA polymerase-associated protein RapA"/>
    <property type="match status" value="1"/>
</dbReference>
<dbReference type="FunFam" id="3.40.50.10810:FF:000012">
    <property type="entry name" value="RNA polymerase-associated protein RapA"/>
    <property type="match status" value="1"/>
</dbReference>
<dbReference type="FunFam" id="3.40.50.300:FF:000350">
    <property type="entry name" value="RNA polymerase-associated protein RapA"/>
    <property type="match status" value="1"/>
</dbReference>
<dbReference type="Gene3D" id="2.30.30.140">
    <property type="match status" value="1"/>
</dbReference>
<dbReference type="Gene3D" id="2.30.30.930">
    <property type="match status" value="1"/>
</dbReference>
<dbReference type="Gene3D" id="3.30.360.80">
    <property type="match status" value="1"/>
</dbReference>
<dbReference type="Gene3D" id="6.10.140.1500">
    <property type="match status" value="1"/>
</dbReference>
<dbReference type="Gene3D" id="6.10.140.2230">
    <property type="match status" value="1"/>
</dbReference>
<dbReference type="Gene3D" id="3.40.50.300">
    <property type="entry name" value="P-loop containing nucleotide triphosphate hydrolases"/>
    <property type="match status" value="1"/>
</dbReference>
<dbReference type="Gene3D" id="3.40.50.10810">
    <property type="entry name" value="Tandem AAA-ATPase domain"/>
    <property type="match status" value="1"/>
</dbReference>
<dbReference type="HAMAP" id="MF_01821">
    <property type="entry name" value="Helicase_RapA"/>
    <property type="match status" value="1"/>
</dbReference>
<dbReference type="InterPro" id="IPR014001">
    <property type="entry name" value="Helicase_ATP-bd"/>
</dbReference>
<dbReference type="InterPro" id="IPR001650">
    <property type="entry name" value="Helicase_C-like"/>
</dbReference>
<dbReference type="InterPro" id="IPR023949">
    <property type="entry name" value="Helicase_RapA"/>
</dbReference>
<dbReference type="InterPro" id="IPR027417">
    <property type="entry name" value="P-loop_NTPase"/>
</dbReference>
<dbReference type="InterPro" id="IPR022737">
    <property type="entry name" value="RapA_C"/>
</dbReference>
<dbReference type="InterPro" id="IPR038718">
    <property type="entry name" value="SNF2-like_sf"/>
</dbReference>
<dbReference type="InterPro" id="IPR049730">
    <property type="entry name" value="SNF2/RAD54-like_C"/>
</dbReference>
<dbReference type="InterPro" id="IPR000330">
    <property type="entry name" value="SNF2_N"/>
</dbReference>
<dbReference type="InterPro" id="IPR040765">
    <property type="entry name" value="Tudor_1_RapA"/>
</dbReference>
<dbReference type="InterPro" id="IPR040766">
    <property type="entry name" value="Tudor_2_RapA"/>
</dbReference>
<dbReference type="NCBIfam" id="NF003426">
    <property type="entry name" value="PRK04914.1"/>
    <property type="match status" value="1"/>
</dbReference>
<dbReference type="PANTHER" id="PTHR45766">
    <property type="entry name" value="DNA ANNEALING HELICASE AND ENDONUCLEASE ZRANB3 FAMILY MEMBER"/>
    <property type="match status" value="1"/>
</dbReference>
<dbReference type="PANTHER" id="PTHR45766:SF6">
    <property type="entry name" value="SWI_SNF-RELATED MATRIX-ASSOCIATED ACTIN-DEPENDENT REGULATOR OF CHROMATIN SUBFAMILY A-LIKE PROTEIN 1"/>
    <property type="match status" value="1"/>
</dbReference>
<dbReference type="Pfam" id="PF00271">
    <property type="entry name" value="Helicase_C"/>
    <property type="match status" value="1"/>
</dbReference>
<dbReference type="Pfam" id="PF12137">
    <property type="entry name" value="RapA_C"/>
    <property type="match status" value="1"/>
</dbReference>
<dbReference type="Pfam" id="PF00176">
    <property type="entry name" value="SNF2-rel_dom"/>
    <property type="match status" value="1"/>
</dbReference>
<dbReference type="Pfam" id="PF18339">
    <property type="entry name" value="Tudor_1_RapA"/>
    <property type="match status" value="1"/>
</dbReference>
<dbReference type="Pfam" id="PF18337">
    <property type="entry name" value="Tudor_RapA"/>
    <property type="match status" value="1"/>
</dbReference>
<dbReference type="SMART" id="SM00487">
    <property type="entry name" value="DEXDc"/>
    <property type="match status" value="1"/>
</dbReference>
<dbReference type="SMART" id="SM00490">
    <property type="entry name" value="HELICc"/>
    <property type="match status" value="1"/>
</dbReference>
<dbReference type="SUPFAM" id="SSF52540">
    <property type="entry name" value="P-loop containing nucleoside triphosphate hydrolases"/>
    <property type="match status" value="2"/>
</dbReference>
<dbReference type="PROSITE" id="PS51192">
    <property type="entry name" value="HELICASE_ATP_BIND_1"/>
    <property type="match status" value="1"/>
</dbReference>
<dbReference type="PROSITE" id="PS51194">
    <property type="entry name" value="HELICASE_CTER"/>
    <property type="match status" value="1"/>
</dbReference>
<keyword id="KW-0010">Activator</keyword>
<keyword id="KW-0067">ATP-binding</keyword>
<keyword id="KW-0238">DNA-binding</keyword>
<keyword id="KW-0347">Helicase</keyword>
<keyword id="KW-0378">Hydrolase</keyword>
<keyword id="KW-0547">Nucleotide-binding</keyword>
<keyword id="KW-0804">Transcription</keyword>
<keyword id="KW-0805">Transcription regulation</keyword>
<name>RAPA_ECOSM</name>
<gene>
    <name evidence="1" type="primary">rapA</name>
    <name type="ordered locus">EcSMS35_0061</name>
</gene>